<sequence length="235" mass="26679">MAWQGLAAEFLQVPAVTRAYTAACVLTTAAVQLELLSPFQLYFNPHLVFRKFQVWRLVTNFLFFGPLGFSFFFNMLFVFRYCRMLEEGSFRGRTADFVFMFLFGGVLMTLLGLLGSLFFLGQALMAMLVYVWSRRSPRVRVNFFGLLTFQAPFLPWALMGFSLLLGNSILVDLLGIAVGHIYYFLEDVFPNQPGGKRLLQTPGFLKLLLDAPAEDPNYLPLPEEQPGPHLPPPQQ</sequence>
<evidence type="ECO:0000255" key="1"/>
<evidence type="ECO:0000256" key="2">
    <source>
        <dbReference type="SAM" id="MobiDB-lite"/>
    </source>
</evidence>
<evidence type="ECO:0000269" key="3">
    <source>
    </source>
</evidence>
<evidence type="ECO:0000269" key="4">
    <source>
    </source>
</evidence>
<evidence type="ECO:0000269" key="5">
    <source>
    </source>
</evidence>
<evidence type="ECO:0000269" key="6">
    <source>
    </source>
</evidence>
<evidence type="ECO:0000269" key="7">
    <source>
    </source>
</evidence>
<evidence type="ECO:0000269" key="8">
    <source ref="2"/>
</evidence>
<evidence type="ECO:0000303" key="9">
    <source>
    </source>
</evidence>
<evidence type="ECO:0000303" key="10">
    <source>
    </source>
</evidence>
<evidence type="ECO:0000303" key="11">
    <source>
    </source>
</evidence>
<evidence type="ECO:0000303" key="12">
    <source ref="2"/>
</evidence>
<evidence type="ECO:0000305" key="13"/>
<evidence type="ECO:0000312" key="14">
    <source>
        <dbReference type="EMBL" id="BAB68409.1"/>
    </source>
</evidence>
<evidence type="ECO:0000312" key="15">
    <source>
        <dbReference type="HGNC" id="HGNC:14236"/>
    </source>
</evidence>
<proteinExistence type="evidence at protein level"/>
<accession>Q96Q80</accession>
<accession>F2Z3B6</accession>
<accession>Q6ICJ6</accession>
<accession>Q6PEX0</accession>
<accession>Q6ZUB5</accession>
<dbReference type="EMBL" id="AB049213">
    <property type="protein sequence ID" value="BAB68409.1"/>
    <property type="molecule type" value="Genomic_DNA"/>
</dbReference>
<dbReference type="EMBL" id="AL389876">
    <property type="status" value="NOT_ANNOTATED_CDS"/>
    <property type="molecule type" value="mRNA"/>
</dbReference>
<dbReference type="EMBL" id="AK125830">
    <property type="protein sequence ID" value="BAC86311.1"/>
    <property type="molecule type" value="mRNA"/>
</dbReference>
<dbReference type="EMBL" id="CR456372">
    <property type="protein sequence ID" value="CAG30258.1"/>
    <property type="molecule type" value="mRNA"/>
</dbReference>
<dbReference type="EMBL" id="AP000350">
    <property type="status" value="NOT_ANNOTATED_CDS"/>
    <property type="molecule type" value="Genomic_DNA"/>
</dbReference>
<dbReference type="EMBL" id="BC057830">
    <property type="protein sequence ID" value="AAH57830.1"/>
    <property type="molecule type" value="mRNA"/>
</dbReference>
<dbReference type="CCDS" id="CCDS33615.1">
    <molecule id="Q96Q80-1"/>
</dbReference>
<dbReference type="CCDS" id="CCDS42986.1">
    <molecule id="Q96Q80-5"/>
</dbReference>
<dbReference type="CCDS" id="CCDS46672.1">
    <molecule id="Q96Q80-2"/>
</dbReference>
<dbReference type="RefSeq" id="NP_001002862.1">
    <molecule id="Q96Q80-1"/>
    <property type="nucleotide sequence ID" value="NM_001002862.3"/>
</dbReference>
<dbReference type="RefSeq" id="NP_001129223.1">
    <molecule id="Q96Q80-2"/>
    <property type="nucleotide sequence ID" value="NM_001135751.2"/>
</dbReference>
<dbReference type="RefSeq" id="NP_001350001.1">
    <molecule id="Q96Q80-3"/>
    <property type="nucleotide sequence ID" value="NM_001363072.2"/>
</dbReference>
<dbReference type="RefSeq" id="NP_940842.2">
    <molecule id="Q96Q80-5"/>
    <property type="nucleotide sequence ID" value="NM_198440.4"/>
</dbReference>
<dbReference type="RefSeq" id="XP_011528808.1">
    <property type="nucleotide sequence ID" value="XM_011530506.2"/>
</dbReference>
<dbReference type="SMR" id="Q96Q80"/>
<dbReference type="BioGRID" id="124816">
    <property type="interactions" value="30"/>
</dbReference>
<dbReference type="ComplexPortal" id="CPX-8783">
    <property type="entry name" value="VCP-DERL3 AAA ATPase complex"/>
</dbReference>
<dbReference type="FunCoup" id="Q96Q80">
    <property type="interactions" value="475"/>
</dbReference>
<dbReference type="IntAct" id="Q96Q80">
    <property type="interactions" value="17"/>
</dbReference>
<dbReference type="STRING" id="9606.ENSP00000384744"/>
<dbReference type="TCDB" id="3.A.16.1.4">
    <property type="family name" value="the endoplasmic reticular retrotranslocon (er-rt) family"/>
</dbReference>
<dbReference type="GlyGen" id="Q96Q80">
    <property type="glycosylation" value="1 site"/>
</dbReference>
<dbReference type="BioMuta" id="DERL3"/>
<dbReference type="DMDM" id="50400613"/>
<dbReference type="jPOST" id="Q96Q80"/>
<dbReference type="MassIVE" id="Q96Q80"/>
<dbReference type="PaxDb" id="9606-ENSP00000384744"/>
<dbReference type="PeptideAtlas" id="Q96Q80"/>
<dbReference type="ProteomicsDB" id="23934"/>
<dbReference type="ProteomicsDB" id="77832">
    <molecule id="Q96Q80-1"/>
</dbReference>
<dbReference type="ProteomicsDB" id="77833">
    <molecule id="Q96Q80-2"/>
</dbReference>
<dbReference type="ProteomicsDB" id="77834">
    <molecule id="Q96Q80-3"/>
</dbReference>
<dbReference type="ProteomicsDB" id="77835">
    <molecule id="Q96Q80-4"/>
</dbReference>
<dbReference type="Pumba" id="Q96Q80"/>
<dbReference type="Antibodypedia" id="23832">
    <property type="antibodies" value="69 antibodies from 20 providers"/>
</dbReference>
<dbReference type="DNASU" id="91319"/>
<dbReference type="Ensembl" id="ENST00000318109.12">
    <molecule id="Q96Q80-1"/>
    <property type="protein sequence ID" value="ENSP00000315303.8"/>
    <property type="gene ID" value="ENSG00000099958.15"/>
</dbReference>
<dbReference type="Ensembl" id="ENST00000406855.7">
    <molecule id="Q96Q80-2"/>
    <property type="protein sequence ID" value="ENSP00000384744.3"/>
    <property type="gene ID" value="ENSG00000099958.15"/>
</dbReference>
<dbReference type="Ensembl" id="ENST00000476077.1">
    <molecule id="Q96Q80-5"/>
    <property type="protein sequence ID" value="ENSP00000419399.1"/>
    <property type="gene ID" value="ENSG00000099958.15"/>
</dbReference>
<dbReference type="Ensembl" id="ENST00000620697.3">
    <molecule id="Q96Q80-2"/>
    <property type="protein sequence ID" value="ENSP00000483693.2"/>
    <property type="gene ID" value="ENSG00000274437.4"/>
</dbReference>
<dbReference type="Ensembl" id="ENST00000628868.1">
    <molecule id="Q96Q80-5"/>
    <property type="protein sequence ID" value="ENSP00000485763.1"/>
    <property type="gene ID" value="ENSG00000274437.4"/>
</dbReference>
<dbReference type="Ensembl" id="ENST00000631305.2">
    <molecule id="Q96Q80-1"/>
    <property type="protein sequence ID" value="ENSP00000486587.1"/>
    <property type="gene ID" value="ENSG00000274437.4"/>
</dbReference>
<dbReference type="GeneID" id="91319"/>
<dbReference type="KEGG" id="hsa:91319"/>
<dbReference type="MANE-Select" id="ENST00000318109.12">
    <property type="protein sequence ID" value="ENSP00000315303.8"/>
    <property type="RefSeq nucleotide sequence ID" value="NM_001002862.3"/>
    <property type="RefSeq protein sequence ID" value="NP_001002862.1"/>
</dbReference>
<dbReference type="UCSC" id="uc002zyh.4">
    <molecule id="Q96Q80-1"/>
    <property type="organism name" value="human"/>
</dbReference>
<dbReference type="AGR" id="HGNC:14236"/>
<dbReference type="CTD" id="91319"/>
<dbReference type="DisGeNET" id="91319"/>
<dbReference type="GeneCards" id="DERL3"/>
<dbReference type="HGNC" id="HGNC:14236">
    <property type="gene designation" value="DERL3"/>
</dbReference>
<dbReference type="HPA" id="ENSG00000099958">
    <property type="expression patterns" value="Tissue enhanced (lymphoid tissue, pancreas, salivary gland)"/>
</dbReference>
<dbReference type="MalaCards" id="DERL3"/>
<dbReference type="MIM" id="610305">
    <property type="type" value="gene"/>
</dbReference>
<dbReference type="neXtProt" id="NX_Q96Q80"/>
<dbReference type="OpenTargets" id="ENSG00000099958"/>
<dbReference type="PharmGKB" id="PA25883"/>
<dbReference type="VEuPathDB" id="HostDB:ENSG00000099958"/>
<dbReference type="eggNOG" id="KOG0858">
    <property type="taxonomic scope" value="Eukaryota"/>
</dbReference>
<dbReference type="GeneTree" id="ENSGT00530000063156"/>
<dbReference type="HOGENOM" id="CLU_051898_5_2_1"/>
<dbReference type="InParanoid" id="Q96Q80"/>
<dbReference type="OMA" id="DFVFMFF"/>
<dbReference type="OrthoDB" id="1716531at2759"/>
<dbReference type="PAN-GO" id="Q96Q80">
    <property type="GO annotations" value="6 GO annotations based on evolutionary models"/>
</dbReference>
<dbReference type="PhylomeDB" id="Q96Q80"/>
<dbReference type="TreeFam" id="TF314715"/>
<dbReference type="PathwayCommons" id="Q96Q80"/>
<dbReference type="Reactome" id="R-HSA-382556">
    <property type="pathway name" value="ABC-family proteins mediated transport"/>
</dbReference>
<dbReference type="Reactome" id="R-HSA-5678895">
    <property type="pathway name" value="Defective CFTR causes cystic fibrosis"/>
</dbReference>
<dbReference type="SignaLink" id="Q96Q80"/>
<dbReference type="BioGRID-ORCS" id="91319">
    <property type="hits" value="5 hits in 1152 CRISPR screens"/>
</dbReference>
<dbReference type="GeneWiki" id="Derlin-3"/>
<dbReference type="GenomeRNAi" id="91319"/>
<dbReference type="Pharos" id="Q96Q80">
    <property type="development level" value="Tbio"/>
</dbReference>
<dbReference type="PRO" id="PR:Q96Q80"/>
<dbReference type="Proteomes" id="UP000005640">
    <property type="component" value="Chromosome 22"/>
</dbReference>
<dbReference type="RNAct" id="Q96Q80">
    <property type="molecule type" value="protein"/>
</dbReference>
<dbReference type="Bgee" id="ENSG00000099958">
    <property type="expression patterns" value="Expressed in bone marrow cell and 98 other cell types or tissues"/>
</dbReference>
<dbReference type="ExpressionAtlas" id="Q96Q80">
    <property type="expression patterns" value="baseline and differential"/>
</dbReference>
<dbReference type="GO" id="GO:0005789">
    <property type="term" value="C:endoplasmic reticulum membrane"/>
    <property type="evidence" value="ECO:0000314"/>
    <property type="project" value="UniProtKB"/>
</dbReference>
<dbReference type="GO" id="GO:0044877">
    <property type="term" value="F:protein-containing complex binding"/>
    <property type="evidence" value="ECO:0000353"/>
    <property type="project" value="UniProtKB"/>
</dbReference>
<dbReference type="GO" id="GO:0005047">
    <property type="term" value="F:signal recognition particle binding"/>
    <property type="evidence" value="ECO:0000314"/>
    <property type="project" value="UniProtKB"/>
</dbReference>
<dbReference type="GO" id="GO:0030968">
    <property type="term" value="P:endoplasmic reticulum unfolded protein response"/>
    <property type="evidence" value="ECO:0000314"/>
    <property type="project" value="UniProtKB"/>
</dbReference>
<dbReference type="GO" id="GO:0036503">
    <property type="term" value="P:ERAD pathway"/>
    <property type="evidence" value="ECO:0000315"/>
    <property type="project" value="UniProtKB"/>
</dbReference>
<dbReference type="GO" id="GO:1904153">
    <property type="term" value="P:negative regulation of retrograde protein transport, ER to cytosol"/>
    <property type="evidence" value="ECO:0000315"/>
    <property type="project" value="ParkinsonsUK-UCL"/>
</dbReference>
<dbReference type="GO" id="GO:0018279">
    <property type="term" value="P:protein N-linked glycosylation via asparagine"/>
    <property type="evidence" value="ECO:0000315"/>
    <property type="project" value="UniProtKB"/>
</dbReference>
<dbReference type="FunFam" id="1.20.1540.10:FF:000016">
    <property type="entry name" value="Derlin"/>
    <property type="match status" value="1"/>
</dbReference>
<dbReference type="InterPro" id="IPR007599">
    <property type="entry name" value="DER1"/>
</dbReference>
<dbReference type="InterPro" id="IPR035952">
    <property type="entry name" value="Rhomboid-like_sf"/>
</dbReference>
<dbReference type="PANTHER" id="PTHR11009">
    <property type="entry name" value="DER1-LIKE PROTEIN, DERLIN"/>
    <property type="match status" value="1"/>
</dbReference>
<dbReference type="Pfam" id="PF04511">
    <property type="entry name" value="DER1"/>
    <property type="match status" value="1"/>
</dbReference>
<dbReference type="SUPFAM" id="SSF144091">
    <property type="entry name" value="Rhomboid-like"/>
    <property type="match status" value="1"/>
</dbReference>
<comment type="function">
    <text evidence="4 6 7">Functional component of endoplasmic reticulum-associated degradation (ERAD) for misfolded lumenal glycoproteins, but not that of misfolded nonglycoproteins. May act by forming a channel that allows the retrotranslocation of misfolded glycoproteins into the cytosol where they are ubiquitinated and degraded by the proteasome. May mediate the interaction between VCP and the misfolded glycoproteins (PubMed:16449189, PubMed:22607976). May be involved in endoplasmic reticulum stress-induced pre-emptive quality control, a mechanism that selectively attenuates the translocation of newly synthesized proteins into the endoplasmic reticulum and reroutes them to the cytosol for proteasomal degradation (PubMed:26565908).</text>
</comment>
<comment type="subunit">
    <text evidence="4 5 7">Forms homo- and heterooligomers with DERL2 and, to a lesser extent, with DERL1 (PubMed:16449189). Interacts with VCP and EDEM1 (PubMed:16449189). Interacts with SELENOK and SELENOS (PubMed:22016385). Interacts with the signal recognition particle/SRP and the SRP receptor; in the process of endoplasmic reticulum stress-induced pre-emptive quality control (PubMed:26565908).</text>
</comment>
<comment type="interaction">
    <interactant intactId="EBI-12831318">
        <id>Q96Q80</id>
    </interactant>
    <interactant intactId="EBI-2339219">
        <id>Q08426</id>
        <label>EHHADH</label>
    </interactant>
    <organismsDiffer>false</organismsDiffer>
    <experiments>3</experiments>
</comment>
<comment type="interaction">
    <interactant intactId="EBI-12831318">
        <id>Q96Q80</id>
    </interactant>
    <interactant intactId="EBI-9304251">
        <id>Q05329</id>
        <label>GAD2</label>
    </interactant>
    <organismsDiffer>false</organismsDiffer>
    <experiments>3</experiments>
</comment>
<comment type="interaction">
    <interactant intactId="EBI-12831318">
        <id>Q96Q80</id>
    </interactant>
    <interactant intactId="EBI-17844792">
        <id>P22749</id>
        <label>GNLY</label>
    </interactant>
    <organismsDiffer>false</organismsDiffer>
    <experiments>3</experiments>
</comment>
<comment type="interaction">
    <interactant intactId="EBI-12831318">
        <id>Q96Q80</id>
    </interactant>
    <interactant intactId="EBI-17935713">
        <id>Q96P66</id>
        <label>GPR101</label>
    </interactant>
    <organismsDiffer>false</organismsDiffer>
    <experiments>3</experiments>
</comment>
<comment type="interaction">
    <interactant intactId="EBI-12831318">
        <id>Q96Q80</id>
    </interactant>
    <interactant intactId="EBI-19045531">
        <id>Q6UWB1</id>
        <label>IL27RA</label>
    </interactant>
    <organismsDiffer>false</organismsDiffer>
    <experiments>3</experiments>
</comment>
<comment type="interaction">
    <interactant intactId="EBI-12831318">
        <id>Q96Q80</id>
    </interactant>
    <interactant intactId="EBI-11978907">
        <id>Q9ULP0-2</id>
        <label>NDRG4</label>
    </interactant>
    <organismsDiffer>false</organismsDiffer>
    <experiments>3</experiments>
</comment>
<comment type="interaction">
    <interactant intactId="EBI-12831318">
        <id>Q96Q80</id>
    </interactant>
    <interactant intactId="EBI-12275482">
        <id>Q96DX8</id>
        <label>RTP4</label>
    </interactant>
    <organismsDiffer>false</organismsDiffer>
    <experiments>3</experiments>
</comment>
<comment type="interaction">
    <interactant intactId="EBI-12831318">
        <id>Q96Q80</id>
    </interactant>
    <interactant intactId="EBI-727004">
        <id>O00560</id>
        <label>SDCBP</label>
    </interactant>
    <organismsDiffer>false</organismsDiffer>
    <experiments>3</experiments>
</comment>
<comment type="interaction">
    <interactant intactId="EBI-12831318">
        <id>Q96Q80</id>
    </interactant>
    <interactant intactId="EBI-12808018">
        <id>Q9UKG4</id>
        <label>SLC13A4</label>
    </interactant>
    <organismsDiffer>false</organismsDiffer>
    <experiments>3</experiments>
</comment>
<comment type="interaction">
    <interactant intactId="EBI-12831318">
        <id>Q96Q80</id>
    </interactant>
    <interactant intactId="EBI-738687">
        <id>P02808</id>
        <label>STATH</label>
    </interactant>
    <organismsDiffer>false</organismsDiffer>
    <experiments>3</experiments>
</comment>
<comment type="interaction">
    <interactant intactId="EBI-12831318">
        <id>Q96Q80</id>
    </interactant>
    <interactant intactId="EBI-10238936">
        <id>Q17RD7</id>
        <label>SYT16</label>
    </interactant>
    <organismsDiffer>false</organismsDiffer>
    <experiments>3</experiments>
</comment>
<comment type="interaction">
    <interactant intactId="EBI-12831318">
        <id>Q96Q80</id>
    </interactant>
    <interactant intactId="EBI-19027521">
        <id>Q8N6K0</id>
        <label>TEX29</label>
    </interactant>
    <organismsDiffer>false</organismsDiffer>
    <experiments>3</experiments>
</comment>
<comment type="interaction">
    <interactant intactId="EBI-12831318">
        <id>Q96Q80</id>
    </interactant>
    <interactant intactId="EBI-11724423">
        <id>Q7Z7N9</id>
        <label>TMEM179B</label>
    </interactant>
    <organismsDiffer>false</organismsDiffer>
    <experiments>3</experiments>
</comment>
<comment type="interaction">
    <interactant intactId="EBI-12831318">
        <id>Q96Q80</id>
    </interactant>
    <interactant intactId="EBI-10975829">
        <id>Q6UXU6</id>
        <label>TMEM92</label>
    </interactant>
    <organismsDiffer>false</organismsDiffer>
    <experiments>3</experiments>
</comment>
<comment type="interaction">
    <interactant intactId="EBI-12831318">
        <id>Q96Q80</id>
    </interactant>
    <interactant intactId="EBI-3919993">
        <id>Q9BZM5</id>
        <label>ULBP2</label>
    </interactant>
    <organismsDiffer>false</organismsDiffer>
    <experiments>3</experiments>
</comment>
<comment type="subcellular location">
    <subcellularLocation>
        <location evidence="4">Endoplasmic reticulum membrane</location>
        <topology evidence="4">Multi-pass membrane protein</topology>
    </subcellularLocation>
</comment>
<comment type="alternative products">
    <event type="alternative splicing"/>
    <isoform>
        <id>Q96Q80-1</id>
        <name>1</name>
        <sequence type="displayed"/>
    </isoform>
    <isoform>
        <id>Q96Q80-2</id>
        <name>2</name>
        <sequence type="described" ref="VSP_011088"/>
    </isoform>
    <isoform>
        <id>Q96Q80-3</id>
        <name>3</name>
        <sequence type="described" ref="VSP_011089"/>
    </isoform>
    <isoform>
        <id>Q96Q80-4</id>
        <name>4</name>
        <sequence type="described" ref="VSP_011086 VSP_011087"/>
    </isoform>
    <isoform>
        <id>Q96Q80-5</id>
        <name>5</name>
        <sequence type="described" ref="VSP_046330"/>
    </isoform>
</comment>
<comment type="tissue specificity">
    <text evidence="4">Unlike DERL1 and DERL2, restricted to several tissues. Expressed at high levels in placenta, pancreas, spleen and small intestine.</text>
</comment>
<comment type="induction">
    <text evidence="4">Up-regulated in response to endoplasmic reticulum stress via the ERN1-XBP1 pathway of the unfolded protein response (UPR).</text>
</comment>
<comment type="similarity">
    <text evidence="13">Belongs to the derlin family.</text>
</comment>
<gene>
    <name evidence="15" type="primary">DERL3</name>
    <name evidence="15" type="synonym">C22orf14</name>
    <name type="synonym">DER3</name>
    <name evidence="14" type="synonym">LLN2</name>
</gene>
<organism>
    <name type="scientific">Homo sapiens</name>
    <name type="common">Human</name>
    <dbReference type="NCBI Taxonomy" id="9606"/>
    <lineage>
        <taxon>Eukaryota</taxon>
        <taxon>Metazoa</taxon>
        <taxon>Chordata</taxon>
        <taxon>Craniata</taxon>
        <taxon>Vertebrata</taxon>
        <taxon>Euteleostomi</taxon>
        <taxon>Mammalia</taxon>
        <taxon>Eutheria</taxon>
        <taxon>Euarchontoglires</taxon>
        <taxon>Primates</taxon>
        <taxon>Haplorrhini</taxon>
        <taxon>Catarrhini</taxon>
        <taxon>Hominidae</taxon>
        <taxon>Homo</taxon>
    </lineage>
</organism>
<name>DERL3_HUMAN</name>
<feature type="chain" id="PRO_0000219048" description="Derlin-3">
    <location>
        <begin position="1"/>
        <end position="235"/>
    </location>
</feature>
<feature type="topological domain" description="Cytoplasmic" evidence="1">
    <location>
        <begin position="1"/>
        <end position="22"/>
    </location>
</feature>
<feature type="transmembrane region" description="Helical; Name=1" evidence="1">
    <location>
        <begin position="23"/>
        <end position="43"/>
    </location>
</feature>
<feature type="topological domain" description="Lumenal" evidence="1">
    <location>
        <begin position="44"/>
        <end position="58"/>
    </location>
</feature>
<feature type="transmembrane region" description="Helical; Name=2" evidence="1">
    <location>
        <begin position="59"/>
        <end position="79"/>
    </location>
</feature>
<feature type="topological domain" description="Cytoplasmic" evidence="1">
    <location>
        <begin position="80"/>
        <end position="98"/>
    </location>
</feature>
<feature type="transmembrane region" description="Helical; Name=3" evidence="1">
    <location>
        <begin position="99"/>
        <end position="119"/>
    </location>
</feature>
<feature type="topological domain" description="Lumenal" evidence="1">
    <location>
        <begin position="120"/>
        <end position="157"/>
    </location>
</feature>
<feature type="transmembrane region" description="Helical; Name=4" evidence="1">
    <location>
        <begin position="158"/>
        <end position="178"/>
    </location>
</feature>
<feature type="topological domain" description="Cytoplasmic" evidence="1">
    <location>
        <begin position="179"/>
        <end position="235"/>
    </location>
</feature>
<feature type="region of interest" description="Disordered" evidence="2">
    <location>
        <begin position="216"/>
        <end position="235"/>
    </location>
</feature>
<feature type="compositionally biased region" description="Pro residues" evidence="2">
    <location>
        <begin position="223"/>
        <end position="235"/>
    </location>
</feature>
<feature type="splice variant" id="VSP_011086" description="In isoform 4." evidence="9">
    <location>
        <begin position="1"/>
        <end position="74"/>
    </location>
</feature>
<feature type="splice variant" id="VSP_011087" description="In isoform 4." evidence="9">
    <original>LLGLLGSLFFLGQALMAMLVYVWSRRSPRVRVNFFGLLTFQAPFLPWALMGFSLLLGNSILVDLLGIAVGHIYYFLEDVFPNQPGGKRLLQTPGFL</original>
    <variation>VSFPQALEPRARAPRRPACVGPGANTAMPERDTVAVSSLVCVEGPLCAQLQGSGLDLQCCMQNTKPRTKEPGTVPALGAHGLLAAAGQLHPRGPAGDCGGPYLLLPGGRLPQPAWRQEAPADPWLPVSVESPPSLSPPSEGSPPMGTCAGLCSTRAPPHR</variation>
    <location>
        <begin position="110"/>
        <end position="205"/>
    </location>
</feature>
<feature type="splice variant" id="VSP_011088" description="In isoform 2." evidence="11">
    <original>KLLLDAPAEDPNYLPLPEEQPGPHLPPPQQ</original>
    <variation>GLQSSKAPAGSSLTIWTQQSQGGPGTAGELAAPS</variation>
    <location>
        <begin position="206"/>
        <end position="235"/>
    </location>
</feature>
<feature type="splice variant" id="VSP_011089" description="In isoform 3." evidence="13">
    <original>KLLLDAPAEDPNYLPLPEEQPGPHLPPPQQ</original>
    <variation>LATAQQCPHRTGPSAGDFRAARPQLAVA</variation>
    <location>
        <begin position="206"/>
        <end position="235"/>
    </location>
</feature>
<feature type="splice variant" id="VSP_046330" description="In isoform 5." evidence="12">
    <location>
        <begin position="206"/>
        <end position="235"/>
    </location>
</feature>
<feature type="sequence variant" id="VAR_048897" description="In dbSNP:rs3177243." evidence="8">
    <original>F</original>
    <variation>L</variation>
    <location>
        <position position="149"/>
    </location>
</feature>
<feature type="sequence variant" id="VAR_019517" description="In dbSNP:rs1128127." evidence="3">
    <original>A</original>
    <variation>V</variation>
    <location>
        <position position="211"/>
    </location>
</feature>
<keyword id="KW-0025">Alternative splicing</keyword>
<keyword id="KW-0256">Endoplasmic reticulum</keyword>
<keyword id="KW-0472">Membrane</keyword>
<keyword id="KW-1267">Proteomics identification</keyword>
<keyword id="KW-1185">Reference proteome</keyword>
<keyword id="KW-0812">Transmembrane</keyword>
<keyword id="KW-1133">Transmembrane helix</keyword>
<protein>
    <recommendedName>
        <fullName evidence="10">Derlin-3</fullName>
    </recommendedName>
    <alternativeName>
        <fullName>Degradation in endoplasmic reticulum protein 3</fullName>
        <shortName>DERtrin-3</shortName>
    </alternativeName>
    <alternativeName>
        <fullName evidence="10">Der1-like protein 3</fullName>
    </alternativeName>
</protein>
<reference key="1">
    <citation type="submission" date="2000-09" db="EMBL/GenBank/DDBJ databases">
        <title>Molecular cloning of a novel member of the NADH oxidoreductase complex I subunit homolog.</title>
        <authorList>
            <person name="Shimizu N."/>
            <person name="Minosima S."/>
            <person name="Kawasaki K."/>
            <person name="Sasaki T."/>
        </authorList>
    </citation>
    <scope>NUCLEOTIDE SEQUENCE (ISOFORM 3)</scope>
</reference>
<reference key="2">
    <citation type="submission" date="2000-07" db="EMBL/GenBank/DDBJ databases">
        <authorList>
            <consortium name="The European IMAGE consortium"/>
        </authorList>
    </citation>
    <scope>NUCLEOTIDE SEQUENCE [LARGE SCALE MRNA] (ISOFORM 5)</scope>
    <scope>VARIANT LEU-149</scope>
</reference>
<reference key="3">
    <citation type="journal article" date="2004" name="Nat. Genet.">
        <title>Complete sequencing and characterization of 21,243 full-length human cDNAs.</title>
        <authorList>
            <person name="Ota T."/>
            <person name="Suzuki Y."/>
            <person name="Nishikawa T."/>
            <person name="Otsuki T."/>
            <person name="Sugiyama T."/>
            <person name="Irie R."/>
            <person name="Wakamatsu A."/>
            <person name="Hayashi K."/>
            <person name="Sato H."/>
            <person name="Nagai K."/>
            <person name="Kimura K."/>
            <person name="Makita H."/>
            <person name="Sekine M."/>
            <person name="Obayashi M."/>
            <person name="Nishi T."/>
            <person name="Shibahara T."/>
            <person name="Tanaka T."/>
            <person name="Ishii S."/>
            <person name="Yamamoto J."/>
            <person name="Saito K."/>
            <person name="Kawai Y."/>
            <person name="Isono Y."/>
            <person name="Nakamura Y."/>
            <person name="Nagahari K."/>
            <person name="Murakami K."/>
            <person name="Yasuda T."/>
            <person name="Iwayanagi T."/>
            <person name="Wagatsuma M."/>
            <person name="Shiratori A."/>
            <person name="Sudo H."/>
            <person name="Hosoiri T."/>
            <person name="Kaku Y."/>
            <person name="Kodaira H."/>
            <person name="Kondo H."/>
            <person name="Sugawara M."/>
            <person name="Takahashi M."/>
            <person name="Kanda K."/>
            <person name="Yokoi T."/>
            <person name="Furuya T."/>
            <person name="Kikkawa E."/>
            <person name="Omura Y."/>
            <person name="Abe K."/>
            <person name="Kamihara K."/>
            <person name="Katsuta N."/>
            <person name="Sato K."/>
            <person name="Tanikawa M."/>
            <person name="Yamazaki M."/>
            <person name="Ninomiya K."/>
            <person name="Ishibashi T."/>
            <person name="Yamashita H."/>
            <person name="Murakawa K."/>
            <person name="Fujimori K."/>
            <person name="Tanai H."/>
            <person name="Kimata M."/>
            <person name="Watanabe M."/>
            <person name="Hiraoka S."/>
            <person name="Chiba Y."/>
            <person name="Ishida S."/>
            <person name="Ono Y."/>
            <person name="Takiguchi S."/>
            <person name="Watanabe S."/>
            <person name="Yosida M."/>
            <person name="Hotuta T."/>
            <person name="Kusano J."/>
            <person name="Kanehori K."/>
            <person name="Takahashi-Fujii A."/>
            <person name="Hara H."/>
            <person name="Tanase T.-O."/>
            <person name="Nomura Y."/>
            <person name="Togiya S."/>
            <person name="Komai F."/>
            <person name="Hara R."/>
            <person name="Takeuchi K."/>
            <person name="Arita M."/>
            <person name="Imose N."/>
            <person name="Musashino K."/>
            <person name="Yuuki H."/>
            <person name="Oshima A."/>
            <person name="Sasaki N."/>
            <person name="Aotsuka S."/>
            <person name="Yoshikawa Y."/>
            <person name="Matsunawa H."/>
            <person name="Ichihara T."/>
            <person name="Shiohata N."/>
            <person name="Sano S."/>
            <person name="Moriya S."/>
            <person name="Momiyama H."/>
            <person name="Satoh N."/>
            <person name="Takami S."/>
            <person name="Terashima Y."/>
            <person name="Suzuki O."/>
            <person name="Nakagawa S."/>
            <person name="Senoh A."/>
            <person name="Mizoguchi H."/>
            <person name="Goto Y."/>
            <person name="Shimizu F."/>
            <person name="Wakebe H."/>
            <person name="Hishigaki H."/>
            <person name="Watanabe T."/>
            <person name="Sugiyama A."/>
            <person name="Takemoto M."/>
            <person name="Kawakami B."/>
            <person name="Yamazaki M."/>
            <person name="Watanabe K."/>
            <person name="Kumagai A."/>
            <person name="Itakura S."/>
            <person name="Fukuzumi Y."/>
            <person name="Fujimori Y."/>
            <person name="Komiyama M."/>
            <person name="Tashiro H."/>
            <person name="Tanigami A."/>
            <person name="Fujiwara T."/>
            <person name="Ono T."/>
            <person name="Yamada K."/>
            <person name="Fujii Y."/>
            <person name="Ozaki K."/>
            <person name="Hirao M."/>
            <person name="Ohmori Y."/>
            <person name="Kawabata A."/>
            <person name="Hikiji T."/>
            <person name="Kobatake N."/>
            <person name="Inagaki H."/>
            <person name="Ikema Y."/>
            <person name="Okamoto S."/>
            <person name="Okitani R."/>
            <person name="Kawakami T."/>
            <person name="Noguchi S."/>
            <person name="Itoh T."/>
            <person name="Shigeta K."/>
            <person name="Senba T."/>
            <person name="Matsumura K."/>
            <person name="Nakajima Y."/>
            <person name="Mizuno T."/>
            <person name="Morinaga M."/>
            <person name="Sasaki M."/>
            <person name="Togashi T."/>
            <person name="Oyama M."/>
            <person name="Hata H."/>
            <person name="Watanabe M."/>
            <person name="Komatsu T."/>
            <person name="Mizushima-Sugano J."/>
            <person name="Satoh T."/>
            <person name="Shirai Y."/>
            <person name="Takahashi Y."/>
            <person name="Nakagawa K."/>
            <person name="Okumura K."/>
            <person name="Nagase T."/>
            <person name="Nomura N."/>
            <person name="Kikuchi H."/>
            <person name="Masuho Y."/>
            <person name="Yamashita R."/>
            <person name="Nakai K."/>
            <person name="Yada T."/>
            <person name="Nakamura Y."/>
            <person name="Ohara O."/>
            <person name="Isogai T."/>
            <person name="Sugano S."/>
        </authorList>
    </citation>
    <scope>NUCLEOTIDE SEQUENCE [LARGE SCALE MRNA] (ISOFORM 4)</scope>
    <scope>VARIANT VAL-211</scope>
    <source>
        <tissue>Testis</tissue>
    </source>
</reference>
<reference key="4">
    <citation type="journal article" date="2004" name="Genome Biol.">
        <title>A genome annotation-driven approach to cloning the human ORFeome.</title>
        <authorList>
            <person name="Collins J.E."/>
            <person name="Wright C.L."/>
            <person name="Edwards C.A."/>
            <person name="Davis M.P."/>
            <person name="Grinham J.A."/>
            <person name="Cole C.G."/>
            <person name="Goward M.E."/>
            <person name="Aguado B."/>
            <person name="Mallya M."/>
            <person name="Mokrab Y."/>
            <person name="Huckle E.J."/>
            <person name="Beare D.M."/>
            <person name="Dunham I."/>
        </authorList>
    </citation>
    <scope>NUCLEOTIDE SEQUENCE [LARGE SCALE MRNA] (ISOFORM 2)</scope>
</reference>
<reference key="5">
    <citation type="journal article" date="1999" name="Nature">
        <title>The DNA sequence of human chromosome 22.</title>
        <authorList>
            <person name="Dunham I."/>
            <person name="Hunt A.R."/>
            <person name="Collins J.E."/>
            <person name="Bruskiewich R."/>
            <person name="Beare D.M."/>
            <person name="Clamp M."/>
            <person name="Smink L.J."/>
            <person name="Ainscough R."/>
            <person name="Almeida J.P."/>
            <person name="Babbage A.K."/>
            <person name="Bagguley C."/>
            <person name="Bailey J."/>
            <person name="Barlow K.F."/>
            <person name="Bates K.N."/>
            <person name="Beasley O.P."/>
            <person name="Bird C.P."/>
            <person name="Blakey S.E."/>
            <person name="Bridgeman A.M."/>
            <person name="Buck D."/>
            <person name="Burgess J."/>
            <person name="Burrill W.D."/>
            <person name="Burton J."/>
            <person name="Carder C."/>
            <person name="Carter N.P."/>
            <person name="Chen Y."/>
            <person name="Clark G."/>
            <person name="Clegg S.M."/>
            <person name="Cobley V.E."/>
            <person name="Cole C.G."/>
            <person name="Collier R.E."/>
            <person name="Connor R."/>
            <person name="Conroy D."/>
            <person name="Corby N.R."/>
            <person name="Coville G.J."/>
            <person name="Cox A.V."/>
            <person name="Davis J."/>
            <person name="Dawson E."/>
            <person name="Dhami P.D."/>
            <person name="Dockree C."/>
            <person name="Dodsworth S.J."/>
            <person name="Durbin R.M."/>
            <person name="Ellington A.G."/>
            <person name="Evans K.L."/>
            <person name="Fey J.M."/>
            <person name="Fleming K."/>
            <person name="French L."/>
            <person name="Garner A.A."/>
            <person name="Gilbert J.G.R."/>
            <person name="Goward M.E."/>
            <person name="Grafham D.V."/>
            <person name="Griffiths M.N.D."/>
            <person name="Hall C."/>
            <person name="Hall R.E."/>
            <person name="Hall-Tamlyn G."/>
            <person name="Heathcott R.W."/>
            <person name="Ho S."/>
            <person name="Holmes S."/>
            <person name="Hunt S.E."/>
            <person name="Jones M.C."/>
            <person name="Kershaw J."/>
            <person name="Kimberley A.M."/>
            <person name="King A."/>
            <person name="Laird G.K."/>
            <person name="Langford C.F."/>
            <person name="Leversha M.A."/>
            <person name="Lloyd C."/>
            <person name="Lloyd D.M."/>
            <person name="Martyn I.D."/>
            <person name="Mashreghi-Mohammadi M."/>
            <person name="Matthews L.H."/>
            <person name="Mccann O.T."/>
            <person name="Mcclay J."/>
            <person name="Mclaren S."/>
            <person name="McMurray A.A."/>
            <person name="Milne S.A."/>
            <person name="Mortimore B.J."/>
            <person name="Odell C.N."/>
            <person name="Pavitt R."/>
            <person name="Pearce A.V."/>
            <person name="Pearson D."/>
            <person name="Phillimore B.J.C.T."/>
            <person name="Phillips S.H."/>
            <person name="Plumb R.W."/>
            <person name="Ramsay H."/>
            <person name="Ramsey Y."/>
            <person name="Rogers L."/>
            <person name="Ross M.T."/>
            <person name="Scott C.E."/>
            <person name="Sehra H.K."/>
            <person name="Skuce C.D."/>
            <person name="Smalley S."/>
            <person name="Smith M.L."/>
            <person name="Soderlund C."/>
            <person name="Spragon L."/>
            <person name="Steward C.A."/>
            <person name="Sulston J.E."/>
            <person name="Swann R.M."/>
            <person name="Vaudin M."/>
            <person name="Wall M."/>
            <person name="Wallis J.M."/>
            <person name="Whiteley M.N."/>
            <person name="Willey D.L."/>
            <person name="Williams L."/>
            <person name="Williams S.A."/>
            <person name="Williamson H."/>
            <person name="Wilmer T.E."/>
            <person name="Wilming L."/>
            <person name="Wright C.L."/>
            <person name="Hubbard T."/>
            <person name="Bentley D.R."/>
            <person name="Beck S."/>
            <person name="Rogers J."/>
            <person name="Shimizu N."/>
            <person name="Minoshima S."/>
            <person name="Kawasaki K."/>
            <person name="Sasaki T."/>
            <person name="Asakawa S."/>
            <person name="Kudoh J."/>
            <person name="Shintani A."/>
            <person name="Shibuya K."/>
            <person name="Yoshizaki Y."/>
            <person name="Aoki N."/>
            <person name="Mitsuyama S."/>
            <person name="Roe B.A."/>
            <person name="Chen F."/>
            <person name="Chu L."/>
            <person name="Crabtree J."/>
            <person name="Deschamps S."/>
            <person name="Do A."/>
            <person name="Do T."/>
            <person name="Dorman A."/>
            <person name="Fang F."/>
            <person name="Fu Y."/>
            <person name="Hu P."/>
            <person name="Hua A."/>
            <person name="Kenton S."/>
            <person name="Lai H."/>
            <person name="Lao H.I."/>
            <person name="Lewis J."/>
            <person name="Lewis S."/>
            <person name="Lin S.-P."/>
            <person name="Loh P."/>
            <person name="Malaj E."/>
            <person name="Nguyen T."/>
            <person name="Pan H."/>
            <person name="Phan S."/>
            <person name="Qi S."/>
            <person name="Qian Y."/>
            <person name="Ray L."/>
            <person name="Ren Q."/>
            <person name="Shaull S."/>
            <person name="Sloan D."/>
            <person name="Song L."/>
            <person name="Wang Q."/>
            <person name="Wang Y."/>
            <person name="Wang Z."/>
            <person name="White J."/>
            <person name="Willingham D."/>
            <person name="Wu H."/>
            <person name="Yao Z."/>
            <person name="Zhan M."/>
            <person name="Zhang G."/>
            <person name="Chissoe S."/>
            <person name="Murray J."/>
            <person name="Miller N."/>
            <person name="Minx P."/>
            <person name="Fulton R."/>
            <person name="Johnson D."/>
            <person name="Bemis G."/>
            <person name="Bentley D."/>
            <person name="Bradshaw H."/>
            <person name="Bourne S."/>
            <person name="Cordes M."/>
            <person name="Du Z."/>
            <person name="Fulton L."/>
            <person name="Goela D."/>
            <person name="Graves T."/>
            <person name="Hawkins J."/>
            <person name="Hinds K."/>
            <person name="Kemp K."/>
            <person name="Latreille P."/>
            <person name="Layman D."/>
            <person name="Ozersky P."/>
            <person name="Rohlfing T."/>
            <person name="Scheet P."/>
            <person name="Walker C."/>
            <person name="Wamsley A."/>
            <person name="Wohldmann P."/>
            <person name="Pepin K."/>
            <person name="Nelson J."/>
            <person name="Korf I."/>
            <person name="Bedell J.A."/>
            <person name="Hillier L.W."/>
            <person name="Mardis E."/>
            <person name="Waterston R."/>
            <person name="Wilson R."/>
            <person name="Emanuel B.S."/>
            <person name="Shaikh T."/>
            <person name="Kurahashi H."/>
            <person name="Saitta S."/>
            <person name="Budarf M.L."/>
            <person name="McDermid H.E."/>
            <person name="Johnson A."/>
            <person name="Wong A.C.C."/>
            <person name="Morrow B.E."/>
            <person name="Edelmann L."/>
            <person name="Kim U.J."/>
            <person name="Shizuya H."/>
            <person name="Simon M.I."/>
            <person name="Dumanski J.P."/>
            <person name="Peyrard M."/>
            <person name="Kedra D."/>
            <person name="Seroussi E."/>
            <person name="Fransson I."/>
            <person name="Tapia I."/>
            <person name="Bruder C.E."/>
            <person name="O'Brien K.P."/>
            <person name="Wilkinson P."/>
            <person name="Bodenteich A."/>
            <person name="Hartman K."/>
            <person name="Hu X."/>
            <person name="Khan A.S."/>
            <person name="Lane L."/>
            <person name="Tilahun Y."/>
            <person name="Wright H."/>
        </authorList>
    </citation>
    <scope>NUCLEOTIDE SEQUENCE [LARGE SCALE GENOMIC DNA]</scope>
</reference>
<reference key="6">
    <citation type="journal article" date="2004" name="Genome Res.">
        <title>The status, quality, and expansion of the NIH full-length cDNA project: the Mammalian Gene Collection (MGC).</title>
        <authorList>
            <consortium name="The MGC Project Team"/>
        </authorList>
    </citation>
    <scope>NUCLEOTIDE SEQUENCE [LARGE SCALE MRNA] (ISOFORM 1)</scope>
    <source>
        <tissue>Placenta</tissue>
    </source>
</reference>
<reference key="7">
    <citation type="journal article" date="2004" name="Nature">
        <title>A membrane protein required for dislocation of misfolded proteins from the ER.</title>
        <authorList>
            <person name="Lilley B.N."/>
            <person name="Ploegh H.L."/>
        </authorList>
    </citation>
    <scope>IDENTIFICATION</scope>
</reference>
<reference key="8">
    <citation type="journal article" date="2006" name="J. Cell Biol.">
        <title>Derlin-2 and Derlin-3 are regulated by the mammalian unfolded protein response and are required for ER-associated degradation.</title>
        <authorList>
            <person name="Oda Y."/>
            <person name="Okada T."/>
            <person name="Yoshida H."/>
            <person name="Kaufman R.J."/>
            <person name="Nagata K."/>
            <person name="Mori K."/>
        </authorList>
    </citation>
    <scope>FUNCTION</scope>
    <scope>TISSUE SPECIFICITY</scope>
    <scope>SUBCELLULAR LOCATION</scope>
    <scope>MEMBRANE TOPOLOGY</scope>
    <scope>OLIGOMERIZATION</scope>
    <scope>INTERACTION WITH VCP AND EDEM1</scope>
    <scope>INDUCTION</scope>
</reference>
<reference key="9">
    <citation type="journal article" date="2011" name="J. Biol. Chem.">
        <title>Selenoprotein K binds multiprotein complexes and is involved in the regulation of endoplasmic reticulum homeostasis.</title>
        <authorList>
            <person name="Shchedrina V.A."/>
            <person name="Everley R.A."/>
            <person name="Zhang Y."/>
            <person name="Gygi S.P."/>
            <person name="Hatfield D.L."/>
            <person name="Gladyshev V.N."/>
        </authorList>
    </citation>
    <scope>INTERACTION WITH SELENOK AND SELENOS</scope>
</reference>
<reference key="10">
    <citation type="journal article" date="2012" name="Mol. Cell">
        <title>STT3B-dependent posttranslational N-glycosylation as a surveillance system for secretory protein.</title>
        <authorList>
            <person name="Sato T."/>
            <person name="Sako Y."/>
            <person name="Sho M."/>
            <person name="Momohara M."/>
            <person name="Suico M.A."/>
            <person name="Shuto T."/>
            <person name="Nishitoh H."/>
            <person name="Okiyoneda T."/>
            <person name="Kokame K."/>
            <person name="Kaneko M."/>
            <person name="Taura M."/>
            <person name="Miyata M."/>
            <person name="Chosa K."/>
            <person name="Koga T."/>
            <person name="Morino-Koga S."/>
            <person name="Wada I."/>
            <person name="Kai H."/>
        </authorList>
    </citation>
    <scope>FUNCTION IN ERAD PATHWAY</scope>
</reference>
<reference key="11">
    <citation type="journal article" date="2015" name="Cell Rep.">
        <title>Pre-emptive quality control protects the ER from protein overload via the proximity of ERAD components and SRP.</title>
        <authorList>
            <person name="Kadowaki H."/>
            <person name="Nagai A."/>
            <person name="Maruyama T."/>
            <person name="Takami Y."/>
            <person name="Satrimafitrah P."/>
            <person name="Kato H."/>
            <person name="Honda A."/>
            <person name="Hatta T."/>
            <person name="Natsume T."/>
            <person name="Sato T."/>
            <person name="Kai H."/>
            <person name="Ichijo H."/>
            <person name="Nishitoh H."/>
        </authorList>
    </citation>
    <scope>FUNCTION</scope>
    <scope>SUBUNIT</scope>
</reference>